<evidence type="ECO:0000255" key="1">
    <source>
        <dbReference type="HAMAP-Rule" id="MF_00500"/>
    </source>
</evidence>
<evidence type="ECO:0000305" key="2"/>
<dbReference type="EMBL" id="CP000260">
    <property type="protein sequence ID" value="ABF34125.1"/>
    <property type="molecule type" value="Genomic_DNA"/>
</dbReference>
<dbReference type="SMR" id="Q1JGL9"/>
<dbReference type="KEGG" id="sph:MGAS10270_Spy1060"/>
<dbReference type="HOGENOM" id="CLU_160655_1_1_9"/>
<dbReference type="Proteomes" id="UP000002436">
    <property type="component" value="Chromosome"/>
</dbReference>
<dbReference type="GO" id="GO:0005829">
    <property type="term" value="C:cytosol"/>
    <property type="evidence" value="ECO:0007669"/>
    <property type="project" value="TreeGrafter"/>
</dbReference>
<dbReference type="GO" id="GO:0015935">
    <property type="term" value="C:small ribosomal subunit"/>
    <property type="evidence" value="ECO:0007669"/>
    <property type="project" value="TreeGrafter"/>
</dbReference>
<dbReference type="GO" id="GO:0070181">
    <property type="term" value="F:small ribosomal subunit rRNA binding"/>
    <property type="evidence" value="ECO:0007669"/>
    <property type="project" value="TreeGrafter"/>
</dbReference>
<dbReference type="GO" id="GO:0003735">
    <property type="term" value="F:structural constituent of ribosome"/>
    <property type="evidence" value="ECO:0007669"/>
    <property type="project" value="InterPro"/>
</dbReference>
<dbReference type="GO" id="GO:0006412">
    <property type="term" value="P:translation"/>
    <property type="evidence" value="ECO:0007669"/>
    <property type="project" value="UniProtKB-UniRule"/>
</dbReference>
<dbReference type="FunFam" id="1.20.58.110:FF:000001">
    <property type="entry name" value="30S ribosomal protein S20"/>
    <property type="match status" value="1"/>
</dbReference>
<dbReference type="Gene3D" id="1.20.58.110">
    <property type="entry name" value="Ribosomal protein S20"/>
    <property type="match status" value="1"/>
</dbReference>
<dbReference type="HAMAP" id="MF_00500">
    <property type="entry name" value="Ribosomal_bS20"/>
    <property type="match status" value="1"/>
</dbReference>
<dbReference type="InterPro" id="IPR002583">
    <property type="entry name" value="Ribosomal_bS20"/>
</dbReference>
<dbReference type="InterPro" id="IPR036510">
    <property type="entry name" value="Ribosomal_bS20_sf"/>
</dbReference>
<dbReference type="NCBIfam" id="TIGR00029">
    <property type="entry name" value="S20"/>
    <property type="match status" value="1"/>
</dbReference>
<dbReference type="PANTHER" id="PTHR33398">
    <property type="entry name" value="30S RIBOSOMAL PROTEIN S20"/>
    <property type="match status" value="1"/>
</dbReference>
<dbReference type="PANTHER" id="PTHR33398:SF1">
    <property type="entry name" value="SMALL RIBOSOMAL SUBUNIT PROTEIN BS20C"/>
    <property type="match status" value="1"/>
</dbReference>
<dbReference type="Pfam" id="PF01649">
    <property type="entry name" value="Ribosomal_S20p"/>
    <property type="match status" value="1"/>
</dbReference>
<dbReference type="SUPFAM" id="SSF46992">
    <property type="entry name" value="Ribosomal protein S20"/>
    <property type="match status" value="1"/>
</dbReference>
<sequence>MEVKTLANIKSAIKRAELNVKANEKNSAQKSAMRTAIKAFEANPSEELFRAASSSIDKAESKGLIHKNKASRDKARLAAKLG</sequence>
<organism>
    <name type="scientific">Streptococcus pyogenes serotype M2 (strain MGAS10270)</name>
    <dbReference type="NCBI Taxonomy" id="370552"/>
    <lineage>
        <taxon>Bacteria</taxon>
        <taxon>Bacillati</taxon>
        <taxon>Bacillota</taxon>
        <taxon>Bacilli</taxon>
        <taxon>Lactobacillales</taxon>
        <taxon>Streptococcaceae</taxon>
        <taxon>Streptococcus</taxon>
    </lineage>
</organism>
<comment type="function">
    <text evidence="1">Binds directly to 16S ribosomal RNA.</text>
</comment>
<comment type="similarity">
    <text evidence="1">Belongs to the bacterial ribosomal protein bS20 family.</text>
</comment>
<gene>
    <name evidence="1" type="primary">rpsT</name>
    <name type="ordered locus">MGAS10270_Spy1060</name>
</gene>
<accession>Q1JGL9</accession>
<protein>
    <recommendedName>
        <fullName evidence="1">Small ribosomal subunit protein bS20</fullName>
    </recommendedName>
    <alternativeName>
        <fullName evidence="2">30S ribosomal protein S20</fullName>
    </alternativeName>
</protein>
<reference key="1">
    <citation type="journal article" date="2006" name="Proc. Natl. Acad. Sci. U.S.A.">
        <title>Molecular genetic anatomy of inter- and intraserotype variation in the human bacterial pathogen group A Streptococcus.</title>
        <authorList>
            <person name="Beres S.B."/>
            <person name="Richter E.W."/>
            <person name="Nagiec M.J."/>
            <person name="Sumby P."/>
            <person name="Porcella S.F."/>
            <person name="DeLeo F.R."/>
            <person name="Musser J.M."/>
        </authorList>
    </citation>
    <scope>NUCLEOTIDE SEQUENCE [LARGE SCALE GENOMIC DNA]</scope>
    <source>
        <strain>MGAS10270</strain>
    </source>
</reference>
<name>RS20_STRPD</name>
<proteinExistence type="inferred from homology"/>
<keyword id="KW-0687">Ribonucleoprotein</keyword>
<keyword id="KW-0689">Ribosomal protein</keyword>
<keyword id="KW-0694">RNA-binding</keyword>
<keyword id="KW-0699">rRNA-binding</keyword>
<feature type="chain" id="PRO_0000260148" description="Small ribosomal subunit protein bS20">
    <location>
        <begin position="1"/>
        <end position="82"/>
    </location>
</feature>